<name>CD1C3_CAVPO</name>
<proteinExistence type="evidence at transcript level"/>
<evidence type="ECO:0000250" key="1"/>
<evidence type="ECO:0000255" key="2"/>
<evidence type="ECO:0000255" key="3">
    <source>
        <dbReference type="PROSITE-ProRule" id="PRU00114"/>
    </source>
</evidence>
<gene>
    <name type="primary">CD1C3</name>
</gene>
<accession>Q9QZY6</accession>
<comment type="function">
    <text evidence="1">Antigen-presenting protein that binds self and non-self lipid and glycolipid antigens and presents them to T-cell receptors on natural killer T-cells.</text>
</comment>
<comment type="subunit">
    <text evidence="1">Heterodimer with B2M (beta-2-microglobulin).</text>
</comment>
<comment type="subcellular location">
    <subcellularLocation>
        <location evidence="1">Cell membrane</location>
        <topology evidence="1">Single-pass type I membrane protein</topology>
    </subcellularLocation>
    <subcellularLocation>
        <location evidence="1">Endosome membrane</location>
    </subcellularLocation>
    <text evidence="1">Subject to intracellular trafficking between the cell membrane and endosomes.</text>
</comment>
<comment type="miscellaneous">
    <text evidence="1">During protein synthesis and maturation, CD1 family members bind endogenous lipids that are replaced by lipid or glycolipid antigens when the proteins are internalized and pass through endosomes or lysosomes, before trafficking back to the cell surface.</text>
</comment>
<protein>
    <recommendedName>
        <fullName>T-cell surface glycoprotein CD1c3</fullName>
    </recommendedName>
    <cdAntigenName>CD1c-3</cdAntigenName>
</protein>
<reference key="1">
    <citation type="journal article" date="1999" name="J. Immunol.">
        <title>Conservation of a CD1 multigene family in the guinea pig.</title>
        <authorList>
            <person name="Dascher C.C."/>
            <person name="Hiromatsu K."/>
            <person name="Naylor J.W."/>
            <person name="Brauer P.P."/>
            <person name="Brown K.A."/>
            <person name="Storey J.R."/>
            <person name="Behar S.M."/>
            <person name="Kawasaki E.S."/>
            <person name="Porcelli S.A."/>
            <person name="Brenner M.B."/>
            <person name="LeClair K.P."/>
        </authorList>
    </citation>
    <scope>NUCLEOTIDE SEQUENCE [MRNA]</scope>
    <source>
        <strain>Hartley</strain>
        <strain>NIH 2</strain>
        <tissue>Thymus</tissue>
    </source>
</reference>
<organism>
    <name type="scientific">Cavia porcellus</name>
    <name type="common">Guinea pig</name>
    <dbReference type="NCBI Taxonomy" id="10141"/>
    <lineage>
        <taxon>Eukaryota</taxon>
        <taxon>Metazoa</taxon>
        <taxon>Chordata</taxon>
        <taxon>Craniata</taxon>
        <taxon>Vertebrata</taxon>
        <taxon>Euteleostomi</taxon>
        <taxon>Mammalia</taxon>
        <taxon>Eutheria</taxon>
        <taxon>Euarchontoglires</taxon>
        <taxon>Glires</taxon>
        <taxon>Rodentia</taxon>
        <taxon>Hystricomorpha</taxon>
        <taxon>Caviidae</taxon>
        <taxon>Cavia</taxon>
    </lineage>
</organism>
<feature type="signal peptide" evidence="2">
    <location>
        <begin position="1"/>
        <end position="17"/>
    </location>
</feature>
<feature type="chain" id="PRO_0000014589" description="T-cell surface glycoprotein CD1c3">
    <location>
        <begin position="18"/>
        <end position="332"/>
    </location>
</feature>
<feature type="topological domain" description="Extracellular" evidence="2">
    <location>
        <begin position="18"/>
        <end position="300"/>
    </location>
</feature>
<feature type="transmembrane region" description="Helical" evidence="2">
    <location>
        <begin position="301"/>
        <end position="321"/>
    </location>
</feature>
<feature type="topological domain" description="Cytoplasmic" evidence="2">
    <location>
        <begin position="322"/>
        <end position="332"/>
    </location>
</feature>
<feature type="domain" description="Ig-like">
    <location>
        <begin position="205"/>
        <end position="292"/>
    </location>
</feature>
<feature type="glycosylation site" description="N-linked (GlcNAc...) asparagine" evidence="2">
    <location>
        <position position="25"/>
    </location>
</feature>
<feature type="glycosylation site" description="N-linked (GlcNAc...) asparagine" evidence="2">
    <location>
        <position position="38"/>
    </location>
</feature>
<feature type="glycosylation site" description="N-linked (GlcNAc...) asparagine" evidence="2">
    <location>
        <position position="75"/>
    </location>
</feature>
<feature type="glycosylation site" description="N-linked (GlcNAc...) asparagine" evidence="2">
    <location>
        <position position="146"/>
    </location>
</feature>
<feature type="disulfide bond" evidence="3">
    <location>
        <begin position="120"/>
        <end position="184"/>
    </location>
</feature>
<feature type="disulfide bond" evidence="3">
    <location>
        <begin position="224"/>
        <end position="279"/>
    </location>
</feature>
<dbReference type="EMBL" id="AF145489">
    <property type="protein sequence ID" value="AAF12744.1"/>
    <property type="molecule type" value="mRNA"/>
</dbReference>
<dbReference type="RefSeq" id="NP_001166326.1">
    <property type="nucleotide sequence ID" value="NM_001172855.1"/>
</dbReference>
<dbReference type="SMR" id="Q9QZY6"/>
<dbReference type="STRING" id="10141.ENSCPOP00000026320"/>
<dbReference type="GlyCosmos" id="Q9QZY6">
    <property type="glycosylation" value="4 sites, No reported glycans"/>
</dbReference>
<dbReference type="Ensembl" id="ENSCPOT00000046800.1">
    <property type="protein sequence ID" value="ENSCPOP00000026320.1"/>
    <property type="gene ID" value="ENSCPOG00000032010.1"/>
</dbReference>
<dbReference type="GeneID" id="100379555"/>
<dbReference type="KEGG" id="cpoc:100379555"/>
<dbReference type="CTD" id="100379555"/>
<dbReference type="VEuPathDB" id="HostDB:ENSCPOG00000032010"/>
<dbReference type="eggNOG" id="ENOG502SJH6">
    <property type="taxonomic scope" value="Eukaryota"/>
</dbReference>
<dbReference type="GeneTree" id="ENSGT01120000271825"/>
<dbReference type="HOGENOM" id="CLU_047501_9_2_1"/>
<dbReference type="InParanoid" id="Q9QZY6"/>
<dbReference type="OMA" id="DMQTHGW"/>
<dbReference type="OrthoDB" id="8890485at2759"/>
<dbReference type="Proteomes" id="UP000005447">
    <property type="component" value="Unassembled WGS sequence"/>
</dbReference>
<dbReference type="Bgee" id="ENSCPOG00000032010">
    <property type="expression patterns" value="Expressed in zone of skin"/>
</dbReference>
<dbReference type="GO" id="GO:0010008">
    <property type="term" value="C:endosome membrane"/>
    <property type="evidence" value="ECO:0007669"/>
    <property type="project" value="UniProtKB-SubCell"/>
</dbReference>
<dbReference type="GO" id="GO:0009897">
    <property type="term" value="C:external side of plasma membrane"/>
    <property type="evidence" value="ECO:0007669"/>
    <property type="project" value="TreeGrafter"/>
</dbReference>
<dbReference type="GO" id="GO:0005615">
    <property type="term" value="C:extracellular space"/>
    <property type="evidence" value="ECO:0007669"/>
    <property type="project" value="TreeGrafter"/>
</dbReference>
<dbReference type="GO" id="GO:0030883">
    <property type="term" value="F:endogenous lipid antigen binding"/>
    <property type="evidence" value="ECO:0007669"/>
    <property type="project" value="TreeGrafter"/>
</dbReference>
<dbReference type="GO" id="GO:0030884">
    <property type="term" value="F:exogenous lipid antigen binding"/>
    <property type="evidence" value="ECO:0007669"/>
    <property type="project" value="TreeGrafter"/>
</dbReference>
<dbReference type="GO" id="GO:0071723">
    <property type="term" value="F:lipopeptide binding"/>
    <property type="evidence" value="ECO:0007669"/>
    <property type="project" value="TreeGrafter"/>
</dbReference>
<dbReference type="GO" id="GO:0002250">
    <property type="term" value="P:adaptive immune response"/>
    <property type="evidence" value="ECO:0007669"/>
    <property type="project" value="UniProtKB-KW"/>
</dbReference>
<dbReference type="GO" id="GO:0048006">
    <property type="term" value="P:antigen processing and presentation, endogenous lipid antigen via MHC class Ib"/>
    <property type="evidence" value="ECO:0007669"/>
    <property type="project" value="TreeGrafter"/>
</dbReference>
<dbReference type="GO" id="GO:0048007">
    <property type="term" value="P:antigen processing and presentation, exogenous lipid antigen via MHC class Ib"/>
    <property type="evidence" value="ECO:0007669"/>
    <property type="project" value="TreeGrafter"/>
</dbReference>
<dbReference type="GO" id="GO:0001916">
    <property type="term" value="P:positive regulation of T cell mediated cytotoxicity"/>
    <property type="evidence" value="ECO:0007669"/>
    <property type="project" value="TreeGrafter"/>
</dbReference>
<dbReference type="CDD" id="cd21029">
    <property type="entry name" value="IgC1_CD1"/>
    <property type="match status" value="1"/>
</dbReference>
<dbReference type="FunFam" id="2.60.40.10:FF:000254">
    <property type="entry name" value="Antigen-presenting glycoprotein CD1d1"/>
    <property type="match status" value="1"/>
</dbReference>
<dbReference type="FunFam" id="3.30.500.10:FF:000002">
    <property type="entry name" value="Antigen-presenting glycoprotein CD1d1"/>
    <property type="match status" value="1"/>
</dbReference>
<dbReference type="Gene3D" id="2.60.40.10">
    <property type="entry name" value="Immunoglobulins"/>
    <property type="match status" value="1"/>
</dbReference>
<dbReference type="Gene3D" id="3.30.500.10">
    <property type="entry name" value="MHC class I-like antigen recognition-like"/>
    <property type="match status" value="1"/>
</dbReference>
<dbReference type="InterPro" id="IPR007110">
    <property type="entry name" value="Ig-like_dom"/>
</dbReference>
<dbReference type="InterPro" id="IPR036179">
    <property type="entry name" value="Ig-like_dom_sf"/>
</dbReference>
<dbReference type="InterPro" id="IPR013783">
    <property type="entry name" value="Ig-like_fold"/>
</dbReference>
<dbReference type="InterPro" id="IPR003597">
    <property type="entry name" value="Ig_C1-set"/>
</dbReference>
<dbReference type="InterPro" id="IPR050208">
    <property type="entry name" value="MHC_class-I_related"/>
</dbReference>
<dbReference type="InterPro" id="IPR011161">
    <property type="entry name" value="MHC_I-like_Ag-recog"/>
</dbReference>
<dbReference type="InterPro" id="IPR037055">
    <property type="entry name" value="MHC_I-like_Ag-recog_sf"/>
</dbReference>
<dbReference type="InterPro" id="IPR011162">
    <property type="entry name" value="MHC_I/II-like_Ag-recog"/>
</dbReference>
<dbReference type="PANTHER" id="PTHR16675">
    <property type="entry name" value="MHC CLASS I-RELATED"/>
    <property type="match status" value="1"/>
</dbReference>
<dbReference type="PANTHER" id="PTHR16675:SF155">
    <property type="entry name" value="T-CELL SURFACE GLYCOPROTEIN CD1C"/>
    <property type="match status" value="1"/>
</dbReference>
<dbReference type="Pfam" id="PF07654">
    <property type="entry name" value="C1-set"/>
    <property type="match status" value="1"/>
</dbReference>
<dbReference type="Pfam" id="PF16497">
    <property type="entry name" value="MHC_I_3"/>
    <property type="match status" value="1"/>
</dbReference>
<dbReference type="SMART" id="SM00407">
    <property type="entry name" value="IGc1"/>
    <property type="match status" value="1"/>
</dbReference>
<dbReference type="SUPFAM" id="SSF48726">
    <property type="entry name" value="Immunoglobulin"/>
    <property type="match status" value="1"/>
</dbReference>
<dbReference type="SUPFAM" id="SSF54452">
    <property type="entry name" value="MHC antigen-recognition domain"/>
    <property type="match status" value="1"/>
</dbReference>
<dbReference type="PROSITE" id="PS50835">
    <property type="entry name" value="IG_LIKE"/>
    <property type="match status" value="1"/>
</dbReference>
<keyword id="KW-1064">Adaptive immunity</keyword>
<keyword id="KW-1003">Cell membrane</keyword>
<keyword id="KW-1015">Disulfide bond</keyword>
<keyword id="KW-0967">Endosome</keyword>
<keyword id="KW-0325">Glycoprotein</keyword>
<keyword id="KW-0391">Immunity</keyword>
<keyword id="KW-0393">Immunoglobulin domain</keyword>
<keyword id="KW-0472">Membrane</keyword>
<keyword id="KW-1185">Reference proteome</keyword>
<keyword id="KW-0732">Signal</keyword>
<keyword id="KW-0812">Transmembrane</keyword>
<keyword id="KW-1133">Transmembrane helix</keyword>
<sequence>MLFLQFLFLDVVLGGSITKNVVQENISFYLMQISSYANQSWVQNCGSGWLGELQTHGWDSESGTIIFLHTWSRGNFSNEELEDIPLLFHVYFSGLSLEVQDRVSQLQIKYPFDIQARAGCELHSGEPPKGFLYGALNGLNFLSYQNKSWVPSPEGGNRAQKVCDLLNTYEGIKETAYHLIRDTCPRFLLGLLDAGKMDLQRQVRPEVWLSSSPNLKPGRLLLACHVSGFYPKPIWVMWMRGAQEQLETKQGDILPHADGTWYLRVTLDVAAKEAAGLSCRVRHSSLRDQDIILYWGHGLSVILITFAVIVPLVLLIILVLLCKKCCTYQGIP</sequence>